<feature type="chain" id="PRO_1000015328" description="Deoxyribose-phosphate aldolase">
    <location>
        <begin position="1"/>
        <end position="227"/>
    </location>
</feature>
<feature type="active site" description="Proton donor/acceptor" evidence="1">
    <location>
        <position position="84"/>
    </location>
</feature>
<feature type="active site" description="Schiff-base intermediate with acetaldehyde" evidence="1">
    <location>
        <position position="146"/>
    </location>
</feature>
<feature type="active site" description="Proton donor/acceptor" evidence="1">
    <location>
        <position position="188"/>
    </location>
</feature>
<comment type="function">
    <text evidence="1">Catalyzes a reversible aldol reaction between acetaldehyde and D-glyceraldehyde 3-phosphate to generate 2-deoxy-D-ribose 5-phosphate.</text>
</comment>
<comment type="catalytic activity">
    <reaction evidence="1">
        <text>2-deoxy-D-ribose 5-phosphate = D-glyceraldehyde 3-phosphate + acetaldehyde</text>
        <dbReference type="Rhea" id="RHEA:12821"/>
        <dbReference type="ChEBI" id="CHEBI:15343"/>
        <dbReference type="ChEBI" id="CHEBI:59776"/>
        <dbReference type="ChEBI" id="CHEBI:62877"/>
        <dbReference type="EC" id="4.1.2.4"/>
    </reaction>
</comment>
<comment type="pathway">
    <text evidence="1">Carbohydrate degradation; 2-deoxy-D-ribose 1-phosphate degradation; D-glyceraldehyde 3-phosphate and acetaldehyde from 2-deoxy-alpha-D-ribose 1-phosphate: step 2/2.</text>
</comment>
<comment type="subcellular location">
    <subcellularLocation>
        <location evidence="1">Cytoplasm</location>
    </subcellularLocation>
</comment>
<comment type="similarity">
    <text evidence="1">Belongs to the DeoC/FbaB aldolase family. DeoC type 1 subfamily.</text>
</comment>
<protein>
    <recommendedName>
        <fullName evidence="1">Deoxyribose-phosphate aldolase</fullName>
        <shortName evidence="1">DERA</shortName>
        <ecNumber evidence="1">4.1.2.4</ecNumber>
    </recommendedName>
    <alternativeName>
        <fullName evidence="1">2-deoxy-D-ribose 5-phosphate aldolase</fullName>
    </alternativeName>
    <alternativeName>
        <fullName evidence="1">Phosphodeoxyriboaldolase</fullName>
        <shortName evidence="1">Deoxyriboaldolase</shortName>
    </alternativeName>
</protein>
<dbReference type="EC" id="4.1.2.4" evidence="1"/>
<dbReference type="EMBL" id="CP000504">
    <property type="protein sequence ID" value="ABL88458.1"/>
    <property type="molecule type" value="Genomic_DNA"/>
</dbReference>
<dbReference type="RefSeq" id="WP_011763033.1">
    <property type="nucleotide sequence ID" value="NC_008701.1"/>
</dbReference>
<dbReference type="SMR" id="A1RU26"/>
<dbReference type="STRING" id="384616.Pisl_1295"/>
<dbReference type="GeneID" id="4617152"/>
<dbReference type="KEGG" id="pis:Pisl_1295"/>
<dbReference type="eggNOG" id="arCOG04320">
    <property type="taxonomic scope" value="Archaea"/>
</dbReference>
<dbReference type="HOGENOM" id="CLU_053595_0_2_2"/>
<dbReference type="OrthoDB" id="31145at2157"/>
<dbReference type="UniPathway" id="UPA00002">
    <property type="reaction ID" value="UER00468"/>
</dbReference>
<dbReference type="Proteomes" id="UP000002595">
    <property type="component" value="Chromosome"/>
</dbReference>
<dbReference type="GO" id="GO:0005737">
    <property type="term" value="C:cytoplasm"/>
    <property type="evidence" value="ECO:0007669"/>
    <property type="project" value="UniProtKB-SubCell"/>
</dbReference>
<dbReference type="GO" id="GO:0004139">
    <property type="term" value="F:deoxyribose-phosphate aldolase activity"/>
    <property type="evidence" value="ECO:0007669"/>
    <property type="project" value="UniProtKB-UniRule"/>
</dbReference>
<dbReference type="GO" id="GO:0006018">
    <property type="term" value="P:2-deoxyribose 1-phosphate catabolic process"/>
    <property type="evidence" value="ECO:0007669"/>
    <property type="project" value="UniProtKB-UniRule"/>
</dbReference>
<dbReference type="GO" id="GO:0016052">
    <property type="term" value="P:carbohydrate catabolic process"/>
    <property type="evidence" value="ECO:0007669"/>
    <property type="project" value="TreeGrafter"/>
</dbReference>
<dbReference type="GO" id="GO:0009264">
    <property type="term" value="P:deoxyribonucleotide catabolic process"/>
    <property type="evidence" value="ECO:0007669"/>
    <property type="project" value="InterPro"/>
</dbReference>
<dbReference type="CDD" id="cd00959">
    <property type="entry name" value="DeoC"/>
    <property type="match status" value="1"/>
</dbReference>
<dbReference type="Gene3D" id="3.20.20.70">
    <property type="entry name" value="Aldolase class I"/>
    <property type="match status" value="1"/>
</dbReference>
<dbReference type="HAMAP" id="MF_00114">
    <property type="entry name" value="DeoC_type1"/>
    <property type="match status" value="1"/>
</dbReference>
<dbReference type="InterPro" id="IPR013785">
    <property type="entry name" value="Aldolase_TIM"/>
</dbReference>
<dbReference type="InterPro" id="IPR011343">
    <property type="entry name" value="DeoC"/>
</dbReference>
<dbReference type="InterPro" id="IPR002915">
    <property type="entry name" value="DeoC/FbaB/LacD_aldolase"/>
</dbReference>
<dbReference type="InterPro" id="IPR028581">
    <property type="entry name" value="DeoC_typeI"/>
</dbReference>
<dbReference type="NCBIfam" id="TIGR00126">
    <property type="entry name" value="deoC"/>
    <property type="match status" value="1"/>
</dbReference>
<dbReference type="PANTHER" id="PTHR10889">
    <property type="entry name" value="DEOXYRIBOSE-PHOSPHATE ALDOLASE"/>
    <property type="match status" value="1"/>
</dbReference>
<dbReference type="PANTHER" id="PTHR10889:SF1">
    <property type="entry name" value="DEOXYRIBOSE-PHOSPHATE ALDOLASE"/>
    <property type="match status" value="1"/>
</dbReference>
<dbReference type="PIRSF" id="PIRSF001357">
    <property type="entry name" value="DeoC"/>
    <property type="match status" value="1"/>
</dbReference>
<dbReference type="SMART" id="SM01133">
    <property type="entry name" value="DeoC"/>
    <property type="match status" value="1"/>
</dbReference>
<dbReference type="SUPFAM" id="SSF51569">
    <property type="entry name" value="Aldolase"/>
    <property type="match status" value="1"/>
</dbReference>
<sequence>MLHLVDYALLKPYLTLEEVVRGAQRAEELGVAAYCVNPVYVPYVRRVLRRVKLCAVVDFPFGAMPTAVRAALVERLADYVEELDIVAPIGLVKSHMWADVRRDLITVVGAAGGRVVKVIVEEPYLTDEERYRLYDIVAESGAHFIKSSTGFAEEGYAKQLGNPIYSTPERAAAIARYIRERGYKLGVKMAGGIRTAEQAKAIIDAIGFGIDPTRVRLGTSTPEVLKT</sequence>
<name>DEOC_PYRIL</name>
<reference key="1">
    <citation type="submission" date="2006-12" db="EMBL/GenBank/DDBJ databases">
        <title>Complete sequence of Pyrobaculum islandicum DSM 4184.</title>
        <authorList>
            <person name="Copeland A."/>
            <person name="Lucas S."/>
            <person name="Lapidus A."/>
            <person name="Barry K."/>
            <person name="Detter J.C."/>
            <person name="Glavina del Rio T."/>
            <person name="Dalin E."/>
            <person name="Tice H."/>
            <person name="Pitluck S."/>
            <person name="Meincke L."/>
            <person name="Brettin T."/>
            <person name="Bruce D."/>
            <person name="Han C."/>
            <person name="Tapia R."/>
            <person name="Gilna P."/>
            <person name="Schmutz J."/>
            <person name="Larimer F."/>
            <person name="Land M."/>
            <person name="Hauser L."/>
            <person name="Kyrpides N."/>
            <person name="Mikhailova N."/>
            <person name="Cozen A.E."/>
            <person name="Fitz-Gibbon S.T."/>
            <person name="House C.H."/>
            <person name="Saltikov C."/>
            <person name="Lowe T."/>
            <person name="Richardson P."/>
        </authorList>
    </citation>
    <scope>NUCLEOTIDE SEQUENCE [LARGE SCALE GENOMIC DNA]</scope>
    <source>
        <strain>DSM 4184 / JCM 9189 / GEO3</strain>
    </source>
</reference>
<evidence type="ECO:0000255" key="1">
    <source>
        <dbReference type="HAMAP-Rule" id="MF_00114"/>
    </source>
</evidence>
<proteinExistence type="inferred from homology"/>
<keyword id="KW-0963">Cytoplasm</keyword>
<keyword id="KW-0456">Lyase</keyword>
<keyword id="KW-0704">Schiff base</keyword>
<accession>A1RU26</accession>
<organism>
    <name type="scientific">Pyrobaculum islandicum (strain DSM 4184 / JCM 9189 / GEO3)</name>
    <dbReference type="NCBI Taxonomy" id="384616"/>
    <lineage>
        <taxon>Archaea</taxon>
        <taxon>Thermoproteota</taxon>
        <taxon>Thermoprotei</taxon>
        <taxon>Thermoproteales</taxon>
        <taxon>Thermoproteaceae</taxon>
        <taxon>Pyrobaculum</taxon>
    </lineage>
</organism>
<gene>
    <name evidence="1" type="primary">deoC</name>
    <name type="ordered locus">Pisl_1295</name>
</gene>